<evidence type="ECO:0000255" key="1">
    <source>
        <dbReference type="HAMAP-Rule" id="MF_01321"/>
    </source>
</evidence>
<gene>
    <name evidence="1" type="primary">rpoB</name>
</gene>
<feature type="chain" id="PRO_0000048043" description="DNA-directed RNA polymerase subunit beta">
    <location>
        <begin position="1"/>
        <end position="1066"/>
    </location>
</feature>
<proteinExistence type="inferred from homology"/>
<accession>Q8WI24</accession>
<keyword id="KW-0150">Chloroplast</keyword>
<keyword id="KW-0240">DNA-directed RNA polymerase</keyword>
<keyword id="KW-0548">Nucleotidyltransferase</keyword>
<keyword id="KW-0934">Plastid</keyword>
<keyword id="KW-0804">Transcription</keyword>
<keyword id="KW-0808">Transferase</keyword>
<protein>
    <recommendedName>
        <fullName evidence="1">DNA-directed RNA polymerase subunit beta</fullName>
        <ecNumber evidence="1">2.7.7.6</ecNumber>
    </recommendedName>
    <alternativeName>
        <fullName evidence="1">PEP</fullName>
    </alternativeName>
    <alternativeName>
        <fullName evidence="1">Plastid-encoded RNA polymerase subunit beta</fullName>
        <shortName evidence="1">RNA polymerase subunit beta</shortName>
    </alternativeName>
</protein>
<sequence length="1066" mass="121287">MILEENKGMFALPGFDLIQYEGFKRFINQGLMEELLKFPKIQDADQEVEFLLVGDQYKLREPSIKEKDAVYKCVTYSSELYVPARLTQKRNRRIREQILFMGSIPLMTSQGTFIINGVTRVLVNQIVRSPGIFYSREPDHKRIPLYTGTIISNWGGRFKLEIDGRMRIWARISKERKFSIITLLLALGLTRKDILNGVCYPNILLDLWKRQDKDIKSSEDAIIELYKNLYCVSGDVTFSESIRKELQRKLFKQRFELGQIGRRNPNNKLNLNVPENESFLLPQDLLAAIDYLIGIKYGIGTLDDIDHLKNRRVRSVANFLQGQLRLALTHLENSIRQTMHKAIKRKRSLTPKGLVISTPLLTTFKEFFGSHPLSQFLDQTNPLAEMIHKRRLSTLGPGGLTRRTASFQVRDIHPSYYGRICPIETSEGINAGLITSLALHARVNDYGYLHSSFYNISDDEEHIVYLSPAEDEYYRIATGNQLASNWGTQEKQVTLARYRQEFLTIAWEQVHFRSLFPLQYFSIGASLIPFLEHNDANRALMGSHMQRQAVPLLKPEKCIVGTGLEGQVALDSGSVTRSTQEGQIVYVDGAKITLSLNDNETIDTELITYKRSNNKTCIKERPIISTGTYLKEGQLLADGTATVGGELAPGRNILVAYMPWEGYNFEDAILISERLISEDIFTSLHIERYEIEVRITNQGIEEITKDIPHLDSYVLRHLDSNGLVVLGSWVETGDVLVGKLTPQEDSLRAPEGKLLQAIFGIQVADTKESCLKVPIGGQGRVIDARWVYKENILINNAKTIHIYILQKRKIRVGDKVAGRHGNKGIVSKILPRQDMPHLQDGTPVDMILSPLGVPSRMNVGQIFECLLGLAGDFMQRHYRITPFDERFEREASRKLVFSELCEASEKTRNPWLFEPDYPGKSRLIDGRTGDTFEQPVTVGKAYMMKLIHQVDDKIHARSSGPYALITQQPLRGRSRRGGQRVGEMEVWALESFGAAYILQEMLTLKSDHIQARYKVLGAIVTGKPIPKPNSVPESFRLLVRELRSLALNLNYFLISEKDLEREMKNV</sequence>
<comment type="function">
    <text evidence="1">DNA-dependent RNA polymerase catalyzes the transcription of DNA into RNA using the four ribonucleoside triphosphates as substrates.</text>
</comment>
<comment type="catalytic activity">
    <reaction evidence="1">
        <text>RNA(n) + a ribonucleoside 5'-triphosphate = RNA(n+1) + diphosphate</text>
        <dbReference type="Rhea" id="RHEA:21248"/>
        <dbReference type="Rhea" id="RHEA-COMP:14527"/>
        <dbReference type="Rhea" id="RHEA-COMP:17342"/>
        <dbReference type="ChEBI" id="CHEBI:33019"/>
        <dbReference type="ChEBI" id="CHEBI:61557"/>
        <dbReference type="ChEBI" id="CHEBI:140395"/>
        <dbReference type="EC" id="2.7.7.6"/>
    </reaction>
</comment>
<comment type="subunit">
    <text evidence="1">In plastids the minimal PEP RNA polymerase catalytic core is composed of four subunits: alpha, beta, beta', and beta''. When a (nuclear-encoded) sigma factor is associated with the core the holoenzyme is formed, which can initiate transcription.</text>
</comment>
<comment type="subcellular location">
    <subcellularLocation>
        <location>Plastid</location>
        <location>Chloroplast</location>
    </subcellularLocation>
</comment>
<comment type="similarity">
    <text evidence="1">Belongs to the RNA polymerase beta chain family.</text>
</comment>
<reference key="1">
    <citation type="journal article" date="2004" name="Mol. Biol. Evol.">
        <title>Chloroplast phylogeny indicates that bryophytes are monophyletic.</title>
        <authorList>
            <person name="Nishiyama T."/>
            <person name="Wolf P.G."/>
            <person name="Kugita M."/>
            <person name="Sinclair R.B."/>
            <person name="Sugita M."/>
            <person name="Sugiura C."/>
            <person name="Wakasugi T."/>
            <person name="Yamada K."/>
            <person name="Yoshinaga K."/>
            <person name="Yamaguchi K."/>
            <person name="Ueda K."/>
            <person name="Hasebe M."/>
        </authorList>
    </citation>
    <scope>NUCLEOTIDE SEQUENCE [LARGE SCALE GENOMIC DNA]</scope>
    <source>
        <strain>Kingyoku</strain>
    </source>
</reference>
<geneLocation type="chloroplast"/>
<dbReference type="EC" id="2.7.7.6" evidence="1"/>
<dbReference type="EMBL" id="AP004638">
    <property type="protein sequence ID" value="BAB84208.1"/>
    <property type="molecule type" value="Genomic_DNA"/>
</dbReference>
<dbReference type="RefSeq" id="NP_569621.1">
    <property type="nucleotide sequence ID" value="NC_003386.1"/>
</dbReference>
<dbReference type="SMR" id="Q8WI24"/>
<dbReference type="GeneID" id="2545167"/>
<dbReference type="GO" id="GO:0009507">
    <property type="term" value="C:chloroplast"/>
    <property type="evidence" value="ECO:0007669"/>
    <property type="project" value="UniProtKB-SubCell"/>
</dbReference>
<dbReference type="GO" id="GO:0000428">
    <property type="term" value="C:DNA-directed RNA polymerase complex"/>
    <property type="evidence" value="ECO:0007669"/>
    <property type="project" value="UniProtKB-KW"/>
</dbReference>
<dbReference type="GO" id="GO:0005739">
    <property type="term" value="C:mitochondrion"/>
    <property type="evidence" value="ECO:0007669"/>
    <property type="project" value="GOC"/>
</dbReference>
<dbReference type="GO" id="GO:0003677">
    <property type="term" value="F:DNA binding"/>
    <property type="evidence" value="ECO:0007669"/>
    <property type="project" value="UniProtKB-UniRule"/>
</dbReference>
<dbReference type="GO" id="GO:0003899">
    <property type="term" value="F:DNA-directed RNA polymerase activity"/>
    <property type="evidence" value="ECO:0007669"/>
    <property type="project" value="UniProtKB-UniRule"/>
</dbReference>
<dbReference type="GO" id="GO:0032549">
    <property type="term" value="F:ribonucleoside binding"/>
    <property type="evidence" value="ECO:0007669"/>
    <property type="project" value="InterPro"/>
</dbReference>
<dbReference type="GO" id="GO:0006351">
    <property type="term" value="P:DNA-templated transcription"/>
    <property type="evidence" value="ECO:0007669"/>
    <property type="project" value="UniProtKB-UniRule"/>
</dbReference>
<dbReference type="CDD" id="cd00653">
    <property type="entry name" value="RNA_pol_B_RPB2"/>
    <property type="match status" value="1"/>
</dbReference>
<dbReference type="Gene3D" id="2.40.50.100">
    <property type="match status" value="1"/>
</dbReference>
<dbReference type="Gene3D" id="2.40.50.150">
    <property type="match status" value="1"/>
</dbReference>
<dbReference type="Gene3D" id="3.90.1100.10">
    <property type="match status" value="1"/>
</dbReference>
<dbReference type="Gene3D" id="2.30.150.10">
    <property type="entry name" value="DNA-directed RNA polymerase, beta subunit, external 1 domain"/>
    <property type="match status" value="1"/>
</dbReference>
<dbReference type="Gene3D" id="2.40.270.10">
    <property type="entry name" value="DNA-directed RNA polymerase, subunit 2, domain 6"/>
    <property type="match status" value="1"/>
</dbReference>
<dbReference type="Gene3D" id="3.90.1800.10">
    <property type="entry name" value="RNA polymerase alpha subunit dimerisation domain"/>
    <property type="match status" value="1"/>
</dbReference>
<dbReference type="Gene3D" id="3.90.1110.10">
    <property type="entry name" value="RNA polymerase Rpb2, domain 2"/>
    <property type="match status" value="1"/>
</dbReference>
<dbReference type="HAMAP" id="MF_01321">
    <property type="entry name" value="RNApol_bact_RpoB"/>
    <property type="match status" value="1"/>
</dbReference>
<dbReference type="InterPro" id="IPR042107">
    <property type="entry name" value="DNA-dir_RNA_pol_bsu_ext_1_sf"/>
</dbReference>
<dbReference type="InterPro" id="IPR015712">
    <property type="entry name" value="DNA-dir_RNA_pol_su2"/>
</dbReference>
<dbReference type="InterPro" id="IPR007120">
    <property type="entry name" value="DNA-dir_RNAP_su2_dom"/>
</dbReference>
<dbReference type="InterPro" id="IPR037033">
    <property type="entry name" value="DNA-dir_RNAP_su2_hyb_sf"/>
</dbReference>
<dbReference type="InterPro" id="IPR010243">
    <property type="entry name" value="RNA_pol_bsu_bac"/>
</dbReference>
<dbReference type="InterPro" id="IPR007121">
    <property type="entry name" value="RNA_pol_bsu_CS"/>
</dbReference>
<dbReference type="InterPro" id="IPR007644">
    <property type="entry name" value="RNA_pol_bsu_protrusion"/>
</dbReference>
<dbReference type="InterPro" id="IPR007642">
    <property type="entry name" value="RNA_pol_Rpb2_2"/>
</dbReference>
<dbReference type="InterPro" id="IPR037034">
    <property type="entry name" value="RNA_pol_Rpb2_2_sf"/>
</dbReference>
<dbReference type="InterPro" id="IPR007645">
    <property type="entry name" value="RNA_pol_Rpb2_3"/>
</dbReference>
<dbReference type="InterPro" id="IPR007641">
    <property type="entry name" value="RNA_pol_Rpb2_7"/>
</dbReference>
<dbReference type="InterPro" id="IPR014724">
    <property type="entry name" value="RNA_pol_RPB2_OB-fold"/>
</dbReference>
<dbReference type="NCBIfam" id="NF001616">
    <property type="entry name" value="PRK00405.1"/>
    <property type="match status" value="1"/>
</dbReference>
<dbReference type="PANTHER" id="PTHR20856">
    <property type="entry name" value="DNA-DIRECTED RNA POLYMERASE I SUBUNIT 2"/>
    <property type="match status" value="1"/>
</dbReference>
<dbReference type="Pfam" id="PF04563">
    <property type="entry name" value="RNA_pol_Rpb2_1"/>
    <property type="match status" value="1"/>
</dbReference>
<dbReference type="Pfam" id="PF04561">
    <property type="entry name" value="RNA_pol_Rpb2_2"/>
    <property type="match status" value="1"/>
</dbReference>
<dbReference type="Pfam" id="PF04565">
    <property type="entry name" value="RNA_pol_Rpb2_3"/>
    <property type="match status" value="1"/>
</dbReference>
<dbReference type="Pfam" id="PF00562">
    <property type="entry name" value="RNA_pol_Rpb2_6"/>
    <property type="match status" value="1"/>
</dbReference>
<dbReference type="Pfam" id="PF04560">
    <property type="entry name" value="RNA_pol_Rpb2_7"/>
    <property type="match status" value="1"/>
</dbReference>
<dbReference type="SUPFAM" id="SSF64484">
    <property type="entry name" value="beta and beta-prime subunits of DNA dependent RNA-polymerase"/>
    <property type="match status" value="1"/>
</dbReference>
<dbReference type="PROSITE" id="PS01166">
    <property type="entry name" value="RNA_POL_BETA"/>
    <property type="match status" value="1"/>
</dbReference>
<name>RPOB_PSINU</name>
<organism>
    <name type="scientific">Psilotum nudum</name>
    <name type="common">Whisk fern</name>
    <name type="synonym">Lycopodium nudum</name>
    <dbReference type="NCBI Taxonomy" id="3240"/>
    <lineage>
        <taxon>Eukaryota</taxon>
        <taxon>Viridiplantae</taxon>
        <taxon>Streptophyta</taxon>
        <taxon>Embryophyta</taxon>
        <taxon>Tracheophyta</taxon>
        <taxon>Polypodiopsida</taxon>
        <taxon>Ophioglossidae</taxon>
        <taxon>Psilotales</taxon>
        <taxon>Psilotaceae</taxon>
        <taxon>Psilotum</taxon>
    </lineage>
</organism>